<protein>
    <recommendedName>
        <fullName>Staphopain B</fullName>
        <ecNumber>3.4.22.-</ecNumber>
    </recommendedName>
    <alternativeName>
        <fullName>Staphylococcal cysteine proteinase B</fullName>
    </alternativeName>
    <alternativeName>
        <fullName>Staphylopain B</fullName>
    </alternativeName>
</protein>
<comment type="function">
    <text evidence="2">Cysteine protease that plays an important role in the inhibition of host innate immune response. Degrades host elastin, fibrogen, fibronectin and kininogen. Blocks phagocytosis of opsonised S.aureus by neutrophils and monocytes by inducing their death in a proteolytic activity-dependent manner. Decreases surface expression of the 'don't eat me' signal CD31 on neutrophils. Cleaves host galectin-3/LGALS3, thereby inhibiting the neutrophil-activating ability of the lectin.</text>
</comment>
<comment type="activity regulation">
    <text evidence="1">Prematurely activated/folded staphopain B is inhibited by staphostatin B (SspC), which is probably required to protect staphylococcal cytoplasmic proteins from degradation by SspB.</text>
</comment>
<comment type="subunit">
    <text evidence="1">In the cytoplasm, prematurely activated/folded SspB forms a stable non-covalent complex with SspC.</text>
</comment>
<comment type="subcellular location">
    <subcellularLocation>
        <location evidence="1">Secreted</location>
    </subcellularLocation>
</comment>
<comment type="PTM">
    <text evidence="1">Proteolytically cleaved by staphylococcal serine protease (SspA).</text>
</comment>
<comment type="miscellaneous">
    <text evidence="1">The cascade of activation of extracellular proteases proceeds from the metalloprotease aureolysin (aur), through SspA to SspB.</text>
</comment>
<comment type="similarity">
    <text evidence="3">Belongs to the peptidase C47 family.</text>
</comment>
<evidence type="ECO:0000250" key="1"/>
<evidence type="ECO:0000250" key="2">
    <source>
        <dbReference type="UniProtKB" id="P0C1S6"/>
    </source>
</evidence>
<evidence type="ECO:0000305" key="3"/>
<keyword id="KW-0378">Hydrolase</keyword>
<keyword id="KW-0645">Protease</keyword>
<keyword id="KW-0964">Secreted</keyword>
<keyword id="KW-0732">Signal</keyword>
<keyword id="KW-0788">Thiol protease</keyword>
<keyword id="KW-0843">Virulence</keyword>
<keyword id="KW-0865">Zymogen</keyword>
<gene>
    <name type="primary">sspB</name>
    <name type="ordered locus">SAR1021</name>
</gene>
<proteinExistence type="inferred from homology"/>
<dbReference type="EC" id="3.4.22.-"/>
<dbReference type="EMBL" id="BX571856">
    <property type="protein sequence ID" value="CAG40025.1"/>
    <property type="molecule type" value="Genomic_DNA"/>
</dbReference>
<dbReference type="RefSeq" id="WP_001088791.1">
    <property type="nucleotide sequence ID" value="NC_002952.2"/>
</dbReference>
<dbReference type="SMR" id="Q6GI35"/>
<dbReference type="MEROPS" id="C47.002"/>
<dbReference type="KEGG" id="sar:SAR1021"/>
<dbReference type="HOGENOM" id="CLU_069043_0_0_9"/>
<dbReference type="PRO" id="PR:Q6GI35"/>
<dbReference type="Proteomes" id="UP000000596">
    <property type="component" value="Chromosome"/>
</dbReference>
<dbReference type="GO" id="GO:0005576">
    <property type="term" value="C:extracellular region"/>
    <property type="evidence" value="ECO:0007669"/>
    <property type="project" value="UniProtKB-SubCell"/>
</dbReference>
<dbReference type="GO" id="GO:0008234">
    <property type="term" value="F:cysteine-type peptidase activity"/>
    <property type="evidence" value="ECO:0007669"/>
    <property type="project" value="UniProtKB-KW"/>
</dbReference>
<dbReference type="GO" id="GO:0006508">
    <property type="term" value="P:proteolysis"/>
    <property type="evidence" value="ECO:0007669"/>
    <property type="project" value="UniProtKB-KW"/>
</dbReference>
<dbReference type="Gene3D" id="3.90.70.10">
    <property type="entry name" value="Cysteine proteinases"/>
    <property type="match status" value="1"/>
</dbReference>
<dbReference type="Gene3D" id="3.10.500.10">
    <property type="entry name" value="Staphopain proregion domain"/>
    <property type="match status" value="1"/>
</dbReference>
<dbReference type="InterPro" id="IPR046350">
    <property type="entry name" value="Cystatin_sf"/>
</dbReference>
<dbReference type="InterPro" id="IPR038765">
    <property type="entry name" value="Papain-like_cys_pep_sf"/>
</dbReference>
<dbReference type="InterPro" id="IPR008750">
    <property type="entry name" value="Peptidase_C47"/>
</dbReference>
<dbReference type="InterPro" id="IPR028076">
    <property type="entry name" value="Staphopain_pro"/>
</dbReference>
<dbReference type="InterPro" id="IPR037155">
    <property type="entry name" value="Staphopain_pro_sf"/>
</dbReference>
<dbReference type="Pfam" id="PF05543">
    <property type="entry name" value="Peptidase_C47"/>
    <property type="match status" value="1"/>
</dbReference>
<dbReference type="Pfam" id="PF14731">
    <property type="entry name" value="Staphopain_pro"/>
    <property type="match status" value="1"/>
</dbReference>
<dbReference type="SUPFAM" id="SSF54403">
    <property type="entry name" value="Cystatin/monellin"/>
    <property type="match status" value="1"/>
</dbReference>
<dbReference type="SUPFAM" id="SSF54001">
    <property type="entry name" value="Cysteine proteinases"/>
    <property type="match status" value="1"/>
</dbReference>
<name>SSPB_STAAR</name>
<feature type="signal peptide" evidence="1">
    <location>
        <begin position="1"/>
        <end position="36"/>
    </location>
</feature>
<feature type="propeptide" id="PRO_0000026567" evidence="1">
    <location>
        <begin position="37"/>
        <end position="219"/>
    </location>
</feature>
<feature type="chain" id="PRO_0000026568" description="Staphopain B">
    <location>
        <begin position="220"/>
        <end position="393"/>
    </location>
</feature>
<feature type="active site" evidence="1">
    <location>
        <position position="243"/>
    </location>
</feature>
<feature type="active site" evidence="1">
    <location>
        <position position="340"/>
    </location>
</feature>
<feature type="active site" evidence="1">
    <location>
        <position position="360"/>
    </location>
</feature>
<feature type="site" description="Cleavage; by SspA" evidence="1">
    <location>
        <begin position="219"/>
        <end position="220"/>
    </location>
</feature>
<accession>Q6GI35</accession>
<sequence length="393" mass="44590">MNSSCKTRVFNIISIIMVSMLILSLGAFANNNKAKADSHSKQLEINVKSDKVPQKVKDLAQQQFAGYAKALDKQSNAKTGKYELGEAFKIYKFNGEEDNSYYYPVIKDGKIVYTLTLSPKNKDDLNKSKEDMNYSVKISNFIAKDLDQIKDKNSNITVLTDEKGFYFEEDGKVRLVKATPLANNIKEKESAKTVSPQLKQELKTTVTPTKVEENEAIQEDQVQYENTLKNFKIREQQFDNSWCAGFSMAALLNATKNTDTYNAHDIMRTLYPEVSEQDLPNCATFPNQMIEYGKSQGRDIHYQEGVPSYNQVDQLTKDNVGIMILAQSVSQNPNDPHLGHALAVVANAKINDQEKLIYWNPWDTELSIQDADSSLLHLSFNRDYNWYGSMIGY</sequence>
<reference key="1">
    <citation type="journal article" date="2004" name="Proc. Natl. Acad. Sci. U.S.A.">
        <title>Complete genomes of two clinical Staphylococcus aureus strains: evidence for the rapid evolution of virulence and drug resistance.</title>
        <authorList>
            <person name="Holden M.T.G."/>
            <person name="Feil E.J."/>
            <person name="Lindsay J.A."/>
            <person name="Peacock S.J."/>
            <person name="Day N.P.J."/>
            <person name="Enright M.C."/>
            <person name="Foster T.J."/>
            <person name="Moore C.E."/>
            <person name="Hurst L."/>
            <person name="Atkin R."/>
            <person name="Barron A."/>
            <person name="Bason N."/>
            <person name="Bentley S.D."/>
            <person name="Chillingworth C."/>
            <person name="Chillingworth T."/>
            <person name="Churcher C."/>
            <person name="Clark L."/>
            <person name="Corton C."/>
            <person name="Cronin A."/>
            <person name="Doggett J."/>
            <person name="Dowd L."/>
            <person name="Feltwell T."/>
            <person name="Hance Z."/>
            <person name="Harris B."/>
            <person name="Hauser H."/>
            <person name="Holroyd S."/>
            <person name="Jagels K."/>
            <person name="James K.D."/>
            <person name="Lennard N."/>
            <person name="Line A."/>
            <person name="Mayes R."/>
            <person name="Moule S."/>
            <person name="Mungall K."/>
            <person name="Ormond D."/>
            <person name="Quail M.A."/>
            <person name="Rabbinowitsch E."/>
            <person name="Rutherford K.M."/>
            <person name="Sanders M."/>
            <person name="Sharp S."/>
            <person name="Simmonds M."/>
            <person name="Stevens K."/>
            <person name="Whitehead S."/>
            <person name="Barrell B.G."/>
            <person name="Spratt B.G."/>
            <person name="Parkhill J."/>
        </authorList>
    </citation>
    <scope>NUCLEOTIDE SEQUENCE [LARGE SCALE GENOMIC DNA]</scope>
    <source>
        <strain>MRSA252</strain>
    </source>
</reference>
<organism>
    <name type="scientific">Staphylococcus aureus (strain MRSA252)</name>
    <dbReference type="NCBI Taxonomy" id="282458"/>
    <lineage>
        <taxon>Bacteria</taxon>
        <taxon>Bacillati</taxon>
        <taxon>Bacillota</taxon>
        <taxon>Bacilli</taxon>
        <taxon>Bacillales</taxon>
        <taxon>Staphylococcaceae</taxon>
        <taxon>Staphylococcus</taxon>
    </lineage>
</organism>